<organism>
    <name type="scientific">Bacillus cereus (strain ATCC 14579 / DSM 31 / CCUG 7414 / JCM 2152 / NBRC 15305 / NCIMB 9373 / NCTC 2599 / NRRL B-3711)</name>
    <dbReference type="NCBI Taxonomy" id="226900"/>
    <lineage>
        <taxon>Bacteria</taxon>
        <taxon>Bacillati</taxon>
        <taxon>Bacillota</taxon>
        <taxon>Bacilli</taxon>
        <taxon>Bacillales</taxon>
        <taxon>Bacillaceae</taxon>
        <taxon>Bacillus</taxon>
        <taxon>Bacillus cereus group</taxon>
    </lineage>
</organism>
<sequence>MKVSYHGHSVVKIEANGKVILIDPFLTGNPKTDLKTEDVKVDAILLSHGHGDHVGDTVELAKKNNAVVVAPFELATFLSWQGVNTHPMHIGGSHEFDFGKVKFTQAFHGSSYIDEENKTITYTGMPAGILFTAEEKTVYHAGDTALFSDMKLIGELNKVDLAFLPIGDNFTMGPEDAVLAAKWINAKTVVPMHYNTFPVIEQDPYQFVEKLQNCTGKVLEAGESITL</sequence>
<evidence type="ECO:0000255" key="1">
    <source>
        <dbReference type="HAMAP-Rule" id="MF_00457"/>
    </source>
</evidence>
<dbReference type="EMBL" id="AE016877">
    <property type="protein sequence ID" value="AAP11520.1"/>
    <property type="molecule type" value="Genomic_DNA"/>
</dbReference>
<dbReference type="RefSeq" id="NP_834319.1">
    <property type="nucleotide sequence ID" value="NC_004722.1"/>
</dbReference>
<dbReference type="RefSeq" id="WP_000868927.1">
    <property type="nucleotide sequence ID" value="NZ_CP138336.1"/>
</dbReference>
<dbReference type="SMR" id="Q817E2"/>
<dbReference type="STRING" id="226900.BC_4613"/>
<dbReference type="KEGG" id="bce:BC4613"/>
<dbReference type="PATRIC" id="fig|226900.8.peg.4774"/>
<dbReference type="HOGENOM" id="CLU_070010_4_1_9"/>
<dbReference type="OrthoDB" id="9789133at2"/>
<dbReference type="Proteomes" id="UP000001417">
    <property type="component" value="Chromosome"/>
</dbReference>
<dbReference type="GO" id="GO:0016787">
    <property type="term" value="F:hydrolase activity"/>
    <property type="evidence" value="ECO:0000318"/>
    <property type="project" value="GO_Central"/>
</dbReference>
<dbReference type="Gene3D" id="3.60.15.10">
    <property type="entry name" value="Ribonuclease Z/Hydroxyacylglutathione hydrolase-like"/>
    <property type="match status" value="1"/>
</dbReference>
<dbReference type="HAMAP" id="MF_00457">
    <property type="entry name" value="UPF0173"/>
    <property type="match status" value="1"/>
</dbReference>
<dbReference type="InterPro" id="IPR001279">
    <property type="entry name" value="Metallo-B-lactamas"/>
</dbReference>
<dbReference type="InterPro" id="IPR036866">
    <property type="entry name" value="RibonucZ/Hydroxyglut_hydro"/>
</dbReference>
<dbReference type="InterPro" id="IPR022877">
    <property type="entry name" value="UPF0173"/>
</dbReference>
<dbReference type="InterPro" id="IPR050114">
    <property type="entry name" value="UPF0173_UPF0282_UlaG_hydrolase"/>
</dbReference>
<dbReference type="NCBIfam" id="NF001911">
    <property type="entry name" value="PRK00685.1"/>
    <property type="match status" value="1"/>
</dbReference>
<dbReference type="PANTHER" id="PTHR43546:SF3">
    <property type="entry name" value="UPF0173 METAL-DEPENDENT HYDROLASE MJ1163"/>
    <property type="match status" value="1"/>
</dbReference>
<dbReference type="PANTHER" id="PTHR43546">
    <property type="entry name" value="UPF0173 METAL-DEPENDENT HYDROLASE MJ1163-RELATED"/>
    <property type="match status" value="1"/>
</dbReference>
<dbReference type="Pfam" id="PF12706">
    <property type="entry name" value="Lactamase_B_2"/>
    <property type="match status" value="1"/>
</dbReference>
<dbReference type="SMART" id="SM00849">
    <property type="entry name" value="Lactamase_B"/>
    <property type="match status" value="1"/>
</dbReference>
<dbReference type="SUPFAM" id="SSF56281">
    <property type="entry name" value="Metallo-hydrolase/oxidoreductase"/>
    <property type="match status" value="1"/>
</dbReference>
<reference key="1">
    <citation type="journal article" date="2003" name="Nature">
        <title>Genome sequence of Bacillus cereus and comparative analysis with Bacillus anthracis.</title>
        <authorList>
            <person name="Ivanova N."/>
            <person name="Sorokin A."/>
            <person name="Anderson I."/>
            <person name="Galleron N."/>
            <person name="Candelon B."/>
            <person name="Kapatral V."/>
            <person name="Bhattacharyya A."/>
            <person name="Reznik G."/>
            <person name="Mikhailova N."/>
            <person name="Lapidus A."/>
            <person name="Chu L."/>
            <person name="Mazur M."/>
            <person name="Goltsman E."/>
            <person name="Larsen N."/>
            <person name="D'Souza M."/>
            <person name="Walunas T."/>
            <person name="Grechkin Y."/>
            <person name="Pusch G."/>
            <person name="Haselkorn R."/>
            <person name="Fonstein M."/>
            <person name="Ehrlich S.D."/>
            <person name="Overbeek R."/>
            <person name="Kyrpides N.C."/>
        </authorList>
    </citation>
    <scope>NUCLEOTIDE SEQUENCE [LARGE SCALE GENOMIC DNA]</scope>
    <source>
        <strain>ATCC 14579 / DSM 31 / CCUG 7414 / JCM 2152 / NBRC 15305 / NCIMB 9373 / NCTC 2599 / NRRL B-3711</strain>
    </source>
</reference>
<proteinExistence type="inferred from homology"/>
<name>Y4613_BACCR</name>
<gene>
    <name type="ordered locus">BC_4613</name>
</gene>
<protein>
    <recommendedName>
        <fullName evidence="1">UPF0173 metal-dependent hydrolase BC_4613</fullName>
    </recommendedName>
</protein>
<accession>Q817E2</accession>
<feature type="chain" id="PRO_0000156368" description="UPF0173 metal-dependent hydrolase BC_4613">
    <location>
        <begin position="1"/>
        <end position="227"/>
    </location>
</feature>
<comment type="similarity">
    <text evidence="1">Belongs to the UPF0173 family.</text>
</comment>
<keyword id="KW-0378">Hydrolase</keyword>
<keyword id="KW-1185">Reference proteome</keyword>